<organism>
    <name type="scientific">Dehalococcoides mccartyi (strain CBDB1)</name>
    <dbReference type="NCBI Taxonomy" id="255470"/>
    <lineage>
        <taxon>Bacteria</taxon>
        <taxon>Bacillati</taxon>
        <taxon>Chloroflexota</taxon>
        <taxon>Dehalococcoidia</taxon>
        <taxon>Dehalococcoidales</taxon>
        <taxon>Dehalococcoidaceae</taxon>
        <taxon>Dehalococcoides</taxon>
    </lineage>
</organism>
<reference key="1">
    <citation type="journal article" date="2005" name="Nat. Biotechnol.">
        <title>Genome sequence of the chlorinated compound-respiring bacterium Dehalococcoides species strain CBDB1.</title>
        <authorList>
            <person name="Kube M."/>
            <person name="Beck A."/>
            <person name="Zinder S.H."/>
            <person name="Kuhl H."/>
            <person name="Reinhardt R."/>
            <person name="Adrian L."/>
        </authorList>
    </citation>
    <scope>NUCLEOTIDE SEQUENCE [LARGE SCALE GENOMIC DNA]</scope>
    <source>
        <strain>CBDB1</strain>
    </source>
</reference>
<proteinExistence type="inferred from homology"/>
<protein>
    <recommendedName>
        <fullName evidence="1">Glycerol-3-phosphate acyltransferase 4</fullName>
    </recommendedName>
    <alternativeName>
        <fullName evidence="1">Acyl-PO4 G3P acyltransferase 4</fullName>
    </alternativeName>
    <alternativeName>
        <fullName evidence="1">Acyl-phosphate--glycerol-3-phosphate acyltransferase 4</fullName>
    </alternativeName>
    <alternativeName>
        <fullName evidence="1">G3P acyltransferase 4</fullName>
        <shortName evidence="1">GPAT 4</shortName>
        <ecNumber evidence="1">2.3.1.275</ecNumber>
    </alternativeName>
    <alternativeName>
        <fullName evidence="1">Lysophosphatidic acid synthase 4</fullName>
        <shortName evidence="1">LPA synthase 4</shortName>
    </alternativeName>
</protein>
<evidence type="ECO:0000255" key="1">
    <source>
        <dbReference type="HAMAP-Rule" id="MF_01043"/>
    </source>
</evidence>
<feature type="chain" id="PRO_0000188357" description="Glycerol-3-phosphate acyltransferase 4">
    <location>
        <begin position="1"/>
        <end position="232"/>
    </location>
</feature>
<feature type="transmembrane region" description="Helical" evidence="1">
    <location>
        <begin position="4"/>
        <end position="24"/>
    </location>
</feature>
<feature type="transmembrane region" description="Helical" evidence="1">
    <location>
        <begin position="54"/>
        <end position="76"/>
    </location>
</feature>
<feature type="transmembrane region" description="Helical" evidence="1">
    <location>
        <begin position="80"/>
        <end position="99"/>
    </location>
</feature>
<feature type="transmembrane region" description="Helical" evidence="1">
    <location>
        <begin position="107"/>
        <end position="127"/>
    </location>
</feature>
<feature type="transmembrane region" description="Helical" evidence="1">
    <location>
        <begin position="143"/>
        <end position="163"/>
    </location>
</feature>
<feature type="transmembrane region" description="Helical" evidence="1">
    <location>
        <begin position="168"/>
        <end position="188"/>
    </location>
</feature>
<gene>
    <name evidence="1" type="primary">plsY4</name>
    <name type="ordered locus">cbdbA1705</name>
</gene>
<name>PLSY4_DEHMC</name>
<keyword id="KW-1003">Cell membrane</keyword>
<keyword id="KW-0444">Lipid biosynthesis</keyword>
<keyword id="KW-0443">Lipid metabolism</keyword>
<keyword id="KW-0472">Membrane</keyword>
<keyword id="KW-0594">Phospholipid biosynthesis</keyword>
<keyword id="KW-1208">Phospholipid metabolism</keyword>
<keyword id="KW-0808">Transferase</keyword>
<keyword id="KW-0812">Transmembrane</keyword>
<keyword id="KW-1133">Transmembrane helix</keyword>
<accession>Q3ZW79</accession>
<sequence length="232" mass="25217">MSPVFLIMIPAGYLVGAIPMAYLLSRWRRGIDIRRYGSGNVGASNVIKTAGKKLGLAVFVFDVSKGAIIILLAGWLGLELWQQIVVGLLTIAGHNWPVFLRFNGGRGIATSLGVALVMAPVPALIALSTALTFGFFKKMAPGVFLGVGALPVMSGYFHGFFGVQEHQTVTWGFAGLFLIMIVRRLMAPDSEYSSTVSKAELVFNRMFLDRDIRSRSVWINRNTAAHKEGLGI</sequence>
<comment type="function">
    <text evidence="1">Catalyzes the transfer of an acyl group from acyl-phosphate (acyl-PO(4)) to glycerol-3-phosphate (G3P) to form lysophosphatidic acid (LPA). This enzyme utilizes acyl-phosphate as fatty acyl donor, but not acyl-CoA or acyl-ACP.</text>
</comment>
<comment type="catalytic activity">
    <reaction evidence="1">
        <text>an acyl phosphate + sn-glycerol 3-phosphate = a 1-acyl-sn-glycero-3-phosphate + phosphate</text>
        <dbReference type="Rhea" id="RHEA:34075"/>
        <dbReference type="ChEBI" id="CHEBI:43474"/>
        <dbReference type="ChEBI" id="CHEBI:57597"/>
        <dbReference type="ChEBI" id="CHEBI:57970"/>
        <dbReference type="ChEBI" id="CHEBI:59918"/>
        <dbReference type="EC" id="2.3.1.275"/>
    </reaction>
</comment>
<comment type="pathway">
    <text evidence="1">Lipid metabolism; phospholipid metabolism.</text>
</comment>
<comment type="subunit">
    <text evidence="1">Probably interacts with PlsX.</text>
</comment>
<comment type="subcellular location">
    <subcellularLocation>
        <location evidence="1">Cell membrane</location>
        <topology evidence="1">Multi-pass membrane protein</topology>
    </subcellularLocation>
</comment>
<comment type="similarity">
    <text evidence="1">Belongs to the PlsY family.</text>
</comment>
<dbReference type="EC" id="2.3.1.275" evidence="1"/>
<dbReference type="EMBL" id="AJ965256">
    <property type="protein sequence ID" value="CAI83708.1"/>
    <property type="molecule type" value="Genomic_DNA"/>
</dbReference>
<dbReference type="RefSeq" id="WP_011310046.1">
    <property type="nucleotide sequence ID" value="NC_007356.1"/>
</dbReference>
<dbReference type="SMR" id="Q3ZW79"/>
<dbReference type="KEGG" id="deh:cbdbA1705"/>
<dbReference type="HOGENOM" id="CLU_081254_7_1_0"/>
<dbReference type="UniPathway" id="UPA00085"/>
<dbReference type="Proteomes" id="UP000000433">
    <property type="component" value="Chromosome"/>
</dbReference>
<dbReference type="GO" id="GO:0005886">
    <property type="term" value="C:plasma membrane"/>
    <property type="evidence" value="ECO:0007669"/>
    <property type="project" value="UniProtKB-SubCell"/>
</dbReference>
<dbReference type="GO" id="GO:0043772">
    <property type="term" value="F:acyl-phosphate glycerol-3-phosphate acyltransferase activity"/>
    <property type="evidence" value="ECO:0007669"/>
    <property type="project" value="UniProtKB-UniRule"/>
</dbReference>
<dbReference type="GO" id="GO:0008654">
    <property type="term" value="P:phospholipid biosynthetic process"/>
    <property type="evidence" value="ECO:0007669"/>
    <property type="project" value="UniProtKB-UniRule"/>
</dbReference>
<dbReference type="HAMAP" id="MF_01043">
    <property type="entry name" value="PlsY"/>
    <property type="match status" value="1"/>
</dbReference>
<dbReference type="InterPro" id="IPR003811">
    <property type="entry name" value="G3P_acylTferase_PlsY"/>
</dbReference>
<dbReference type="NCBIfam" id="NF010993">
    <property type="entry name" value="PRK14417.1"/>
    <property type="match status" value="1"/>
</dbReference>
<dbReference type="PANTHER" id="PTHR30309:SF0">
    <property type="entry name" value="GLYCEROL-3-PHOSPHATE ACYLTRANSFERASE-RELATED"/>
    <property type="match status" value="1"/>
</dbReference>
<dbReference type="PANTHER" id="PTHR30309">
    <property type="entry name" value="INNER MEMBRANE PROTEIN YGIH"/>
    <property type="match status" value="1"/>
</dbReference>
<dbReference type="Pfam" id="PF02660">
    <property type="entry name" value="G3P_acyltransf"/>
    <property type="match status" value="1"/>
</dbReference>
<dbReference type="SMART" id="SM01207">
    <property type="entry name" value="G3P_acyltransf"/>
    <property type="match status" value="1"/>
</dbReference>